<gene>
    <name evidence="1" type="primary">rpoA</name>
</gene>
<feature type="chain" id="PRO_0000175459" description="DNA-directed RNA polymerase subunit alpha">
    <location>
        <begin position="1"/>
        <end position="318"/>
    </location>
</feature>
<feature type="region of interest" description="Alpha N-terminal domain (alpha-NTD)" evidence="1">
    <location>
        <begin position="1"/>
        <end position="227"/>
    </location>
</feature>
<feature type="region of interest" description="Alpha C-terminal domain (alpha-CTD)" evidence="1">
    <location>
        <begin position="241"/>
        <end position="318"/>
    </location>
</feature>
<comment type="function">
    <text evidence="1">DNA-dependent RNA polymerase catalyzes the transcription of DNA into RNA using the four ribonucleoside triphosphates as substrates.</text>
</comment>
<comment type="catalytic activity">
    <reaction evidence="1">
        <text>RNA(n) + a ribonucleoside 5'-triphosphate = RNA(n+1) + diphosphate</text>
        <dbReference type="Rhea" id="RHEA:21248"/>
        <dbReference type="Rhea" id="RHEA-COMP:14527"/>
        <dbReference type="Rhea" id="RHEA-COMP:17342"/>
        <dbReference type="ChEBI" id="CHEBI:33019"/>
        <dbReference type="ChEBI" id="CHEBI:61557"/>
        <dbReference type="ChEBI" id="CHEBI:140395"/>
        <dbReference type="EC" id="2.7.7.6"/>
    </reaction>
</comment>
<comment type="subunit">
    <text evidence="1">In plastids the minimal PEP RNA polymerase catalytic core is composed of four subunits: alpha, beta, beta', and beta''. When a (nuclear-encoded) sigma factor is associated with the core the holoenzyme is formed, which can initiate transcription.</text>
</comment>
<comment type="subcellular location">
    <subcellularLocation>
        <location>Plastid</location>
        <location>Chloroplast</location>
    </subcellularLocation>
</comment>
<comment type="domain">
    <text evidence="1">The N-terminal domain is essential for RNAP assembly and basal transcription, whereas the C-terminal domain is involved in interaction with transcriptional regulators and with upstream promoter elements.</text>
</comment>
<comment type="similarity">
    <text evidence="1">Belongs to the RNA polymerase alpha chain family.</text>
</comment>
<geneLocation type="chloroplast"/>
<organism>
    <name type="scientific">Guillardia theta</name>
    <name type="common">Cryptophyte</name>
    <name type="synonym">Cryptomonas phi</name>
    <dbReference type="NCBI Taxonomy" id="55529"/>
    <lineage>
        <taxon>Eukaryota</taxon>
        <taxon>Cryptophyceae</taxon>
        <taxon>Pyrenomonadales</taxon>
        <taxon>Geminigeraceae</taxon>
        <taxon>Guillardia</taxon>
    </lineage>
</organism>
<proteinExistence type="inferred from homology"/>
<keyword id="KW-0150">Chloroplast</keyword>
<keyword id="KW-0240">DNA-directed RNA polymerase</keyword>
<keyword id="KW-0548">Nucleotidyltransferase</keyword>
<keyword id="KW-0934">Plastid</keyword>
<keyword id="KW-0804">Transcription</keyword>
<keyword id="KW-0808">Transferase</keyword>
<name>RPOA_GUITH</name>
<protein>
    <recommendedName>
        <fullName evidence="1">DNA-directed RNA polymerase subunit alpha</fullName>
        <shortName evidence="1">PEP</shortName>
        <ecNumber evidence="1">2.7.7.6</ecNumber>
    </recommendedName>
    <alternativeName>
        <fullName evidence="1">Plastid-encoded RNA polymerase subunit alpha</fullName>
        <shortName evidence="1">RNA polymerase subunit alpha</shortName>
    </alternativeName>
</protein>
<reference key="1">
    <citation type="journal article" date="1997" name="Biochem. Mol. Biol. Int.">
        <title>The large ribosomal protein gene cluster of a cryptomonad plastid: gene organization, sequence and evolutionary implications.</title>
        <authorList>
            <person name="Wang S.L."/>
            <person name="Liu X.-Q."/>
            <person name="Douglas S.E."/>
        </authorList>
    </citation>
    <scope>NUCLEOTIDE SEQUENCE [GENOMIC DNA]</scope>
</reference>
<reference key="2">
    <citation type="journal article" date="1999" name="J. Mol. Evol.">
        <title>The plastid genome of the cryptophyte alga, Guillardia theta: complete sequence and conserved synteny groups confirm its common ancestry with red algae.</title>
        <authorList>
            <person name="Douglas S.E."/>
            <person name="Penny S.L."/>
        </authorList>
    </citation>
    <scope>NUCLEOTIDE SEQUENCE [LARGE SCALE GENOMIC DNA]</scope>
</reference>
<dbReference type="EC" id="2.7.7.6" evidence="1"/>
<dbReference type="EMBL" id="AF041468">
    <property type="protein sequence ID" value="AAC35724.1"/>
    <property type="molecule type" value="Genomic_DNA"/>
</dbReference>
<dbReference type="RefSeq" id="NP_050790.1">
    <property type="nucleotide sequence ID" value="NC_000926.1"/>
</dbReference>
<dbReference type="SMR" id="O46914"/>
<dbReference type="GeneID" id="857098"/>
<dbReference type="HOGENOM" id="CLU_053084_0_1_1"/>
<dbReference type="OMA" id="PIKNVKY"/>
<dbReference type="GO" id="GO:0009507">
    <property type="term" value="C:chloroplast"/>
    <property type="evidence" value="ECO:0007669"/>
    <property type="project" value="UniProtKB-SubCell"/>
</dbReference>
<dbReference type="GO" id="GO:0000428">
    <property type="term" value="C:DNA-directed RNA polymerase complex"/>
    <property type="evidence" value="ECO:0007669"/>
    <property type="project" value="UniProtKB-KW"/>
</dbReference>
<dbReference type="GO" id="GO:0005739">
    <property type="term" value="C:mitochondrion"/>
    <property type="evidence" value="ECO:0007669"/>
    <property type="project" value="GOC"/>
</dbReference>
<dbReference type="GO" id="GO:0003677">
    <property type="term" value="F:DNA binding"/>
    <property type="evidence" value="ECO:0007669"/>
    <property type="project" value="UniProtKB-UniRule"/>
</dbReference>
<dbReference type="GO" id="GO:0003899">
    <property type="term" value="F:DNA-directed RNA polymerase activity"/>
    <property type="evidence" value="ECO:0007669"/>
    <property type="project" value="UniProtKB-UniRule"/>
</dbReference>
<dbReference type="GO" id="GO:0046983">
    <property type="term" value="F:protein dimerization activity"/>
    <property type="evidence" value="ECO:0007669"/>
    <property type="project" value="InterPro"/>
</dbReference>
<dbReference type="GO" id="GO:0006351">
    <property type="term" value="P:DNA-templated transcription"/>
    <property type="evidence" value="ECO:0007669"/>
    <property type="project" value="UniProtKB-UniRule"/>
</dbReference>
<dbReference type="CDD" id="cd06928">
    <property type="entry name" value="RNAP_alpha_NTD"/>
    <property type="match status" value="1"/>
</dbReference>
<dbReference type="FunFam" id="2.170.120.12:FF:000001">
    <property type="entry name" value="DNA-directed RNA polymerase subunit alpha"/>
    <property type="match status" value="1"/>
</dbReference>
<dbReference type="Gene3D" id="1.10.150.20">
    <property type="entry name" value="5' to 3' exonuclease, C-terminal subdomain"/>
    <property type="match status" value="1"/>
</dbReference>
<dbReference type="Gene3D" id="2.170.120.12">
    <property type="entry name" value="DNA-directed RNA polymerase, insert domain"/>
    <property type="match status" value="1"/>
</dbReference>
<dbReference type="Gene3D" id="3.30.1360.10">
    <property type="entry name" value="RNA polymerase, RBP11-like subunit"/>
    <property type="match status" value="1"/>
</dbReference>
<dbReference type="HAMAP" id="MF_00059">
    <property type="entry name" value="RNApol_bact_RpoA"/>
    <property type="match status" value="1"/>
</dbReference>
<dbReference type="InterPro" id="IPR011262">
    <property type="entry name" value="DNA-dir_RNA_pol_insert"/>
</dbReference>
<dbReference type="InterPro" id="IPR011263">
    <property type="entry name" value="DNA-dir_RNA_pol_RpoA/D/Rpb3"/>
</dbReference>
<dbReference type="InterPro" id="IPR011773">
    <property type="entry name" value="DNA-dir_RpoA"/>
</dbReference>
<dbReference type="InterPro" id="IPR036603">
    <property type="entry name" value="RBP11-like"/>
</dbReference>
<dbReference type="InterPro" id="IPR011260">
    <property type="entry name" value="RNAP_asu_C"/>
</dbReference>
<dbReference type="InterPro" id="IPR036643">
    <property type="entry name" value="RNApol_insert_sf"/>
</dbReference>
<dbReference type="NCBIfam" id="NF003516">
    <property type="entry name" value="PRK05182.2-2"/>
    <property type="match status" value="1"/>
</dbReference>
<dbReference type="NCBIfam" id="NF003519">
    <property type="entry name" value="PRK05182.2-5"/>
    <property type="match status" value="1"/>
</dbReference>
<dbReference type="NCBIfam" id="TIGR02027">
    <property type="entry name" value="rpoA"/>
    <property type="match status" value="1"/>
</dbReference>
<dbReference type="Pfam" id="PF01000">
    <property type="entry name" value="RNA_pol_A_bac"/>
    <property type="match status" value="1"/>
</dbReference>
<dbReference type="Pfam" id="PF03118">
    <property type="entry name" value="RNA_pol_A_CTD"/>
    <property type="match status" value="1"/>
</dbReference>
<dbReference type="Pfam" id="PF01193">
    <property type="entry name" value="RNA_pol_L"/>
    <property type="match status" value="1"/>
</dbReference>
<dbReference type="SMART" id="SM00662">
    <property type="entry name" value="RPOLD"/>
    <property type="match status" value="1"/>
</dbReference>
<dbReference type="SUPFAM" id="SSF47789">
    <property type="entry name" value="C-terminal domain of RNA polymerase alpha subunit"/>
    <property type="match status" value="1"/>
</dbReference>
<dbReference type="SUPFAM" id="SSF56553">
    <property type="entry name" value="Insert subdomain of RNA polymerase alpha subunit"/>
    <property type="match status" value="1"/>
</dbReference>
<dbReference type="SUPFAM" id="SSF55257">
    <property type="entry name" value="RBP11-like subunits of RNA polymerase"/>
    <property type="match status" value="1"/>
</dbReference>
<sequence length="318" mass="35799">MTQFEIECLDSKVYNARDHWSRFVIDPLKPGQGTTLGNALRRTLLSELEGLAITAVRIAGVSHEFSTINGIREDVLEILLNLKEIVFSGQLQESTIGRLTVQGPAIVTARSFELPPEIKLIDPEQYIATICGNNTLEMEFKIEVGSGYKIVEKDNSTEHFEFLQVDSVFMPVKKVNFRIEETRGENNILNEQLILDIWTNGSISAKEAISNAADNLINLFSPLKTIDGESETDYETNETSHINQILIEELQLSVRAYNCLKRGCAHIHSVADLLDYSQEDLIEIKNFGQKSAEEVIDALQKRLGINLPKEKTTKIYNK</sequence>
<evidence type="ECO:0000255" key="1">
    <source>
        <dbReference type="HAMAP-Rule" id="MF_00059"/>
    </source>
</evidence>
<accession>O46914</accession>